<sequence>MITIAVDCMGGDHGPRVTLPACRHFLDRHADAQLLLVGRPESLGAFSHQRAKTVAASEVVSMDDPLEVALRRKKDSSMRVAIQQVKDGAAQAAVSAGNTAALMAISRYLLKTLDGIDRPAIAGQIPNAKGEATTVLDMGANVDCSAEHLLQFAMMGSALVSVLNGKDSPSVGLLNIGEEAIKGNEVIKKAGELLRSASKAGDLNFYGNVEGNDIFKGTADIVVCDGFVGNVALKASEGLATMIVDFLKMEFSRSIFTKFAAIAAYPIISALKKRMDHRRYNGGALLGLRGLVFKSHGSADELAFEYALTRAYDAARNNLLDRVQARIAHAAPLWGASGRSVPSGAAVPV</sequence>
<feature type="chain" id="PRO_1000001811" description="Phosphate acyltransferase">
    <location>
        <begin position="1"/>
        <end position="349"/>
    </location>
</feature>
<comment type="function">
    <text evidence="1">Catalyzes the reversible formation of acyl-phosphate (acyl-PO(4)) from acyl-[acyl-carrier-protein] (acyl-ACP). This enzyme utilizes acyl-ACP as fatty acyl donor, but not acyl-CoA.</text>
</comment>
<comment type="catalytic activity">
    <reaction evidence="1">
        <text>a fatty acyl-[ACP] + phosphate = an acyl phosphate + holo-[ACP]</text>
        <dbReference type="Rhea" id="RHEA:42292"/>
        <dbReference type="Rhea" id="RHEA-COMP:9685"/>
        <dbReference type="Rhea" id="RHEA-COMP:14125"/>
        <dbReference type="ChEBI" id="CHEBI:43474"/>
        <dbReference type="ChEBI" id="CHEBI:59918"/>
        <dbReference type="ChEBI" id="CHEBI:64479"/>
        <dbReference type="ChEBI" id="CHEBI:138651"/>
        <dbReference type="EC" id="2.3.1.274"/>
    </reaction>
</comment>
<comment type="pathway">
    <text evidence="1">Lipid metabolism; phospholipid metabolism.</text>
</comment>
<comment type="subunit">
    <text evidence="1">Homodimer. Probably interacts with PlsY.</text>
</comment>
<comment type="subcellular location">
    <subcellularLocation>
        <location evidence="1">Cytoplasm</location>
    </subcellularLocation>
    <text evidence="1">Associated with the membrane possibly through PlsY.</text>
</comment>
<comment type="similarity">
    <text evidence="1">Belongs to the PlsX family.</text>
</comment>
<evidence type="ECO:0000255" key="1">
    <source>
        <dbReference type="HAMAP-Rule" id="MF_00019"/>
    </source>
</evidence>
<keyword id="KW-0963">Cytoplasm</keyword>
<keyword id="KW-0444">Lipid biosynthesis</keyword>
<keyword id="KW-0443">Lipid metabolism</keyword>
<keyword id="KW-0594">Phospholipid biosynthesis</keyword>
<keyword id="KW-1208">Phospholipid metabolism</keyword>
<keyword id="KW-1185">Reference proteome</keyword>
<keyword id="KW-0808">Transferase</keyword>
<protein>
    <recommendedName>
        <fullName evidence="1">Phosphate acyltransferase</fullName>
        <ecNumber evidence="1">2.3.1.274</ecNumber>
    </recommendedName>
    <alternativeName>
        <fullName evidence="1">Acyl-ACP phosphotransacylase</fullName>
    </alternativeName>
    <alternativeName>
        <fullName evidence="1">Acyl-[acyl-carrier-protein]--phosphate acyltransferase</fullName>
    </alternativeName>
    <alternativeName>
        <fullName evidence="1">Phosphate-acyl-ACP acyltransferase</fullName>
    </alternativeName>
</protein>
<name>PLSX_ALBFT</name>
<proteinExistence type="inferred from homology"/>
<gene>
    <name evidence="1" type="primary">plsX</name>
    <name type="ordered locus">Rfer_1729</name>
</gene>
<organism>
    <name type="scientific">Albidiferax ferrireducens (strain ATCC BAA-621 / DSM 15236 / T118)</name>
    <name type="common">Rhodoferax ferrireducens</name>
    <dbReference type="NCBI Taxonomy" id="338969"/>
    <lineage>
        <taxon>Bacteria</taxon>
        <taxon>Pseudomonadati</taxon>
        <taxon>Pseudomonadota</taxon>
        <taxon>Betaproteobacteria</taxon>
        <taxon>Burkholderiales</taxon>
        <taxon>Comamonadaceae</taxon>
        <taxon>Rhodoferax</taxon>
    </lineage>
</organism>
<dbReference type="EC" id="2.3.1.274" evidence="1"/>
<dbReference type="EMBL" id="CP000267">
    <property type="protein sequence ID" value="ABD69458.1"/>
    <property type="molecule type" value="Genomic_DNA"/>
</dbReference>
<dbReference type="RefSeq" id="WP_011464026.1">
    <property type="nucleotide sequence ID" value="NC_007908.1"/>
</dbReference>
<dbReference type="SMR" id="Q21XP5"/>
<dbReference type="STRING" id="338969.Rfer_1729"/>
<dbReference type="KEGG" id="rfr:Rfer_1729"/>
<dbReference type="eggNOG" id="COG0416">
    <property type="taxonomic scope" value="Bacteria"/>
</dbReference>
<dbReference type="HOGENOM" id="CLU_039379_1_0_4"/>
<dbReference type="OrthoDB" id="9806408at2"/>
<dbReference type="UniPathway" id="UPA00085"/>
<dbReference type="Proteomes" id="UP000008332">
    <property type="component" value="Chromosome"/>
</dbReference>
<dbReference type="GO" id="GO:0005737">
    <property type="term" value="C:cytoplasm"/>
    <property type="evidence" value="ECO:0007669"/>
    <property type="project" value="UniProtKB-SubCell"/>
</dbReference>
<dbReference type="GO" id="GO:0043811">
    <property type="term" value="F:phosphate:acyl-[acyl carrier protein] acyltransferase activity"/>
    <property type="evidence" value="ECO:0007669"/>
    <property type="project" value="UniProtKB-UniRule"/>
</dbReference>
<dbReference type="GO" id="GO:0006633">
    <property type="term" value="P:fatty acid biosynthetic process"/>
    <property type="evidence" value="ECO:0007669"/>
    <property type="project" value="UniProtKB-UniRule"/>
</dbReference>
<dbReference type="GO" id="GO:0008654">
    <property type="term" value="P:phospholipid biosynthetic process"/>
    <property type="evidence" value="ECO:0007669"/>
    <property type="project" value="UniProtKB-KW"/>
</dbReference>
<dbReference type="Gene3D" id="3.40.718.10">
    <property type="entry name" value="Isopropylmalate Dehydrogenase"/>
    <property type="match status" value="1"/>
</dbReference>
<dbReference type="HAMAP" id="MF_00019">
    <property type="entry name" value="PlsX"/>
    <property type="match status" value="1"/>
</dbReference>
<dbReference type="InterPro" id="IPR003664">
    <property type="entry name" value="FA_synthesis"/>
</dbReference>
<dbReference type="InterPro" id="IPR012281">
    <property type="entry name" value="Phospholipid_synth_PlsX-like"/>
</dbReference>
<dbReference type="NCBIfam" id="TIGR00182">
    <property type="entry name" value="plsX"/>
    <property type="match status" value="1"/>
</dbReference>
<dbReference type="PANTHER" id="PTHR30100">
    <property type="entry name" value="FATTY ACID/PHOSPHOLIPID SYNTHESIS PROTEIN PLSX"/>
    <property type="match status" value="1"/>
</dbReference>
<dbReference type="PANTHER" id="PTHR30100:SF1">
    <property type="entry name" value="PHOSPHATE ACYLTRANSFERASE"/>
    <property type="match status" value="1"/>
</dbReference>
<dbReference type="Pfam" id="PF02504">
    <property type="entry name" value="FA_synthesis"/>
    <property type="match status" value="1"/>
</dbReference>
<dbReference type="PIRSF" id="PIRSF002465">
    <property type="entry name" value="Phsphlp_syn_PlsX"/>
    <property type="match status" value="1"/>
</dbReference>
<dbReference type="SUPFAM" id="SSF53659">
    <property type="entry name" value="Isocitrate/Isopropylmalate dehydrogenase-like"/>
    <property type="match status" value="1"/>
</dbReference>
<reference key="1">
    <citation type="submission" date="2006-02" db="EMBL/GenBank/DDBJ databases">
        <title>Complete sequence of chromosome of Rhodoferax ferrireducens DSM 15236.</title>
        <authorList>
            <person name="Copeland A."/>
            <person name="Lucas S."/>
            <person name="Lapidus A."/>
            <person name="Barry K."/>
            <person name="Detter J.C."/>
            <person name="Glavina del Rio T."/>
            <person name="Hammon N."/>
            <person name="Israni S."/>
            <person name="Pitluck S."/>
            <person name="Brettin T."/>
            <person name="Bruce D."/>
            <person name="Han C."/>
            <person name="Tapia R."/>
            <person name="Gilna P."/>
            <person name="Kiss H."/>
            <person name="Schmutz J."/>
            <person name="Larimer F."/>
            <person name="Land M."/>
            <person name="Kyrpides N."/>
            <person name="Ivanova N."/>
            <person name="Richardson P."/>
        </authorList>
    </citation>
    <scope>NUCLEOTIDE SEQUENCE [LARGE SCALE GENOMIC DNA]</scope>
    <source>
        <strain>ATCC BAA-621 / DSM 15236 / T118</strain>
    </source>
</reference>
<accession>Q21XP5</accession>